<name>Y1581_MYCBO</name>
<accession>P67437</accession>
<accession>A0A1R3XZK8</accession>
<accession>Q10774</accession>
<accession>Q79FM7</accession>
<accession>X2BI74</accession>
<feature type="chain" id="PRO_0000070663" description="Uncharacterized HTH-type transcriptional regulator Mb1581">
    <location>
        <begin position="1"/>
        <end position="202"/>
    </location>
</feature>
<feature type="domain" description="HTH tetR-type" evidence="1">
    <location>
        <begin position="19"/>
        <end position="79"/>
    </location>
</feature>
<feature type="region of interest" description="Disordered" evidence="2">
    <location>
        <begin position="1"/>
        <end position="20"/>
    </location>
</feature>
<gene>
    <name type="ordered locus">BQ2027_MB1581</name>
</gene>
<evidence type="ECO:0000255" key="1">
    <source>
        <dbReference type="PROSITE-ProRule" id="PRU00335"/>
    </source>
</evidence>
<evidence type="ECO:0000256" key="2">
    <source>
        <dbReference type="SAM" id="MobiDB-lite"/>
    </source>
</evidence>
<reference key="1">
    <citation type="journal article" date="2003" name="Proc. Natl. Acad. Sci. U.S.A.">
        <title>The complete genome sequence of Mycobacterium bovis.</title>
        <authorList>
            <person name="Garnier T."/>
            <person name="Eiglmeier K."/>
            <person name="Camus J.-C."/>
            <person name="Medina N."/>
            <person name="Mansoor H."/>
            <person name="Pryor M."/>
            <person name="Duthoy S."/>
            <person name="Grondin S."/>
            <person name="Lacroix C."/>
            <person name="Monsempe C."/>
            <person name="Simon S."/>
            <person name="Harris B."/>
            <person name="Atkin R."/>
            <person name="Doggett J."/>
            <person name="Mayes R."/>
            <person name="Keating L."/>
            <person name="Wheeler P.R."/>
            <person name="Parkhill J."/>
            <person name="Barrell B.G."/>
            <person name="Cole S.T."/>
            <person name="Gordon S.V."/>
            <person name="Hewinson R.G."/>
        </authorList>
    </citation>
    <scope>NUCLEOTIDE SEQUENCE [LARGE SCALE GENOMIC DNA]</scope>
    <source>
        <strain>ATCC BAA-935 / AF2122/97</strain>
    </source>
</reference>
<reference key="2">
    <citation type="journal article" date="2017" name="Genome Announc.">
        <title>Updated reference genome sequence and annotation of Mycobacterium bovis AF2122/97.</title>
        <authorList>
            <person name="Malone K.M."/>
            <person name="Farrell D."/>
            <person name="Stuber T.P."/>
            <person name="Schubert O.T."/>
            <person name="Aebersold R."/>
            <person name="Robbe-Austerman S."/>
            <person name="Gordon S.V."/>
        </authorList>
    </citation>
    <scope>NUCLEOTIDE SEQUENCE [LARGE SCALE GENOMIC DNA]</scope>
    <scope>GENOME REANNOTATION</scope>
    <source>
        <strain>ATCC BAA-935 / AF2122/97</strain>
    </source>
</reference>
<keyword id="KW-0238">DNA-binding</keyword>
<keyword id="KW-1185">Reference proteome</keyword>
<keyword id="KW-0677">Repeat</keyword>
<keyword id="KW-0804">Transcription</keyword>
<keyword id="KW-0805">Transcription regulation</keyword>
<protein>
    <recommendedName>
        <fullName>Uncharacterized HTH-type transcriptional regulator Mb1581</fullName>
    </recommendedName>
</protein>
<sequence length="202" mass="22330">MVGAVTQIADRPTDPSPWSPRETELLAVTLRLLQEHGYDRLTVDAVAASARASKATVYRRWPSKAELVLAAFIEGIRQVAVPPNTGNLRDDLLRLGELICREVGQHASTIRAVLVEVSRNPALNDVLQHQFVDHRKALIQYILQQAVDRGEISSAAISDELWDLLPGYLIFRSIIPNRPPTQDTVQALVDDVILPSLTRSTG</sequence>
<organism>
    <name type="scientific">Mycobacterium bovis (strain ATCC BAA-935 / AF2122/97)</name>
    <dbReference type="NCBI Taxonomy" id="233413"/>
    <lineage>
        <taxon>Bacteria</taxon>
        <taxon>Bacillati</taxon>
        <taxon>Actinomycetota</taxon>
        <taxon>Actinomycetes</taxon>
        <taxon>Mycobacteriales</taxon>
        <taxon>Mycobacteriaceae</taxon>
        <taxon>Mycobacterium</taxon>
        <taxon>Mycobacterium tuberculosis complex</taxon>
    </lineage>
</organism>
<proteinExistence type="predicted"/>
<dbReference type="EMBL" id="LT708304">
    <property type="protein sequence ID" value="SIU00184.1"/>
    <property type="molecule type" value="Genomic_DNA"/>
</dbReference>
<dbReference type="RefSeq" id="NP_855233.1">
    <property type="nucleotide sequence ID" value="NC_002945.3"/>
</dbReference>
<dbReference type="RefSeq" id="WP_003407773.1">
    <property type="nucleotide sequence ID" value="NC_002945.4"/>
</dbReference>
<dbReference type="SMR" id="P67437"/>
<dbReference type="KEGG" id="mbo:BQ2027_MB1581"/>
<dbReference type="PATRIC" id="fig|233413.5.peg.1728"/>
<dbReference type="Proteomes" id="UP000001419">
    <property type="component" value="Chromosome"/>
</dbReference>
<dbReference type="GO" id="GO:0003700">
    <property type="term" value="F:DNA-binding transcription factor activity"/>
    <property type="evidence" value="ECO:0007669"/>
    <property type="project" value="TreeGrafter"/>
</dbReference>
<dbReference type="GO" id="GO:0000976">
    <property type="term" value="F:transcription cis-regulatory region binding"/>
    <property type="evidence" value="ECO:0007669"/>
    <property type="project" value="TreeGrafter"/>
</dbReference>
<dbReference type="Gene3D" id="1.10.10.60">
    <property type="entry name" value="Homeodomain-like"/>
    <property type="match status" value="1"/>
</dbReference>
<dbReference type="Gene3D" id="1.10.357.10">
    <property type="entry name" value="Tetracycline Repressor, domain 2"/>
    <property type="match status" value="1"/>
</dbReference>
<dbReference type="InterPro" id="IPR023772">
    <property type="entry name" value="DNA-bd_HTH_TetR-type_CS"/>
</dbReference>
<dbReference type="InterPro" id="IPR009057">
    <property type="entry name" value="Homeodomain-like_sf"/>
</dbReference>
<dbReference type="InterPro" id="IPR050109">
    <property type="entry name" value="HTH-type_TetR-like_transc_reg"/>
</dbReference>
<dbReference type="InterPro" id="IPR001647">
    <property type="entry name" value="HTH_TetR"/>
</dbReference>
<dbReference type="InterPro" id="IPR036271">
    <property type="entry name" value="Tet_transcr_reg_TetR-rel_C_sf"/>
</dbReference>
<dbReference type="InterPro" id="IPR011075">
    <property type="entry name" value="TetR_C"/>
</dbReference>
<dbReference type="PANTHER" id="PTHR30055">
    <property type="entry name" value="HTH-TYPE TRANSCRIPTIONAL REGULATOR RUTR"/>
    <property type="match status" value="1"/>
</dbReference>
<dbReference type="PANTHER" id="PTHR30055:SF149">
    <property type="entry name" value="TETR-FAMILY TRANSCRIPTIONAL REGULATOR"/>
    <property type="match status" value="1"/>
</dbReference>
<dbReference type="Pfam" id="PF16859">
    <property type="entry name" value="TetR_C_11"/>
    <property type="match status" value="1"/>
</dbReference>
<dbReference type="Pfam" id="PF00440">
    <property type="entry name" value="TetR_N"/>
    <property type="match status" value="1"/>
</dbReference>
<dbReference type="PRINTS" id="PR00455">
    <property type="entry name" value="HTHTETR"/>
</dbReference>
<dbReference type="SUPFAM" id="SSF46689">
    <property type="entry name" value="Homeodomain-like"/>
    <property type="match status" value="1"/>
</dbReference>
<dbReference type="SUPFAM" id="SSF48498">
    <property type="entry name" value="Tetracyclin repressor-like, C-terminal domain"/>
    <property type="match status" value="1"/>
</dbReference>
<dbReference type="PROSITE" id="PS01081">
    <property type="entry name" value="HTH_TETR_1"/>
    <property type="match status" value="1"/>
</dbReference>
<dbReference type="PROSITE" id="PS50977">
    <property type="entry name" value="HTH_TETR_2"/>
    <property type="match status" value="1"/>
</dbReference>